<name>RSMA_MYCTO</name>
<sequence length="317" mass="34646">MCCTSGCALTIRLLGRTEIRRLAKELDFRPRKSLGQNFVHDANTVRRVVAASGVSRSDLVLEVGPGLGSLTLALLDRGATVTAVEIDPLLASRLQQTVAEHSHSEVHRLTVVNRDVLALRREDLAAAPTAVVANLPYNVAVPALLHLLVEFPSIRVVTVMVQAEVAERLAAEPGSKEYGVPSVKLRFFGRVRRCGMVSPTVFWPIPRVYSGLVRIDRYETSPWPTDDAFRRRVFELVDIAFAQRRKTSRNAFVQWAGSGSESANRLLAASIDPARRGETLSIDDFVRLLRRSGGSDEATSTGRDARAPDISGHASAS</sequence>
<feature type="chain" id="PRO_0000428270" description="Ribosomal RNA small subunit methyltransferase A">
    <location>
        <begin position="1"/>
        <end position="317"/>
    </location>
</feature>
<feature type="region of interest" description="Disordered" evidence="2">
    <location>
        <begin position="293"/>
        <end position="317"/>
    </location>
</feature>
<feature type="binding site" evidence="1">
    <location>
        <position position="37"/>
    </location>
    <ligand>
        <name>S-adenosyl-L-methionine</name>
        <dbReference type="ChEBI" id="CHEBI:59789"/>
    </ligand>
</feature>
<feature type="binding site" evidence="1">
    <location>
        <position position="39"/>
    </location>
    <ligand>
        <name>S-adenosyl-L-methionine</name>
        <dbReference type="ChEBI" id="CHEBI:59789"/>
    </ligand>
</feature>
<feature type="binding site" evidence="1">
    <location>
        <position position="64"/>
    </location>
    <ligand>
        <name>S-adenosyl-L-methionine</name>
        <dbReference type="ChEBI" id="CHEBI:59789"/>
    </ligand>
</feature>
<feature type="binding site" evidence="1">
    <location>
        <position position="85"/>
    </location>
    <ligand>
        <name>S-adenosyl-L-methionine</name>
        <dbReference type="ChEBI" id="CHEBI:59789"/>
    </ligand>
</feature>
<feature type="binding site" evidence="1">
    <location>
        <position position="115"/>
    </location>
    <ligand>
        <name>S-adenosyl-L-methionine</name>
        <dbReference type="ChEBI" id="CHEBI:59789"/>
    </ligand>
</feature>
<feature type="binding site" evidence="1">
    <location>
        <position position="134"/>
    </location>
    <ligand>
        <name>S-adenosyl-L-methionine</name>
        <dbReference type="ChEBI" id="CHEBI:59789"/>
    </ligand>
</feature>
<proteinExistence type="inferred from homology"/>
<evidence type="ECO:0000255" key="1">
    <source>
        <dbReference type="HAMAP-Rule" id="MF_00607"/>
    </source>
</evidence>
<evidence type="ECO:0000256" key="2">
    <source>
        <dbReference type="SAM" id="MobiDB-lite"/>
    </source>
</evidence>
<reference key="1">
    <citation type="journal article" date="2002" name="J. Bacteriol.">
        <title>Whole-genome comparison of Mycobacterium tuberculosis clinical and laboratory strains.</title>
        <authorList>
            <person name="Fleischmann R.D."/>
            <person name="Alland D."/>
            <person name="Eisen J.A."/>
            <person name="Carpenter L."/>
            <person name="White O."/>
            <person name="Peterson J.D."/>
            <person name="DeBoy R.T."/>
            <person name="Dodson R.J."/>
            <person name="Gwinn M.L."/>
            <person name="Haft D.H."/>
            <person name="Hickey E.K."/>
            <person name="Kolonay J.F."/>
            <person name="Nelson W.C."/>
            <person name="Umayam L.A."/>
            <person name="Ermolaeva M.D."/>
            <person name="Salzberg S.L."/>
            <person name="Delcher A."/>
            <person name="Utterback T.R."/>
            <person name="Weidman J.F."/>
            <person name="Khouri H.M."/>
            <person name="Gill J."/>
            <person name="Mikula A."/>
            <person name="Bishai W."/>
            <person name="Jacobs W.R. Jr."/>
            <person name="Venter J.C."/>
            <person name="Fraser C.M."/>
        </authorList>
    </citation>
    <scope>NUCLEOTIDE SEQUENCE [LARGE SCALE GENOMIC DNA]</scope>
    <source>
        <strain>CDC 1551 / Oshkosh</strain>
    </source>
</reference>
<gene>
    <name type="primary">ksgA</name>
    <name type="synonym">rsmA</name>
    <name type="ordered locus">MT1039</name>
</gene>
<accession>P9WH06</accession>
<accession>L0T5G0</accession>
<accession>O05595</accession>
<accession>P66660</accession>
<dbReference type="EC" id="2.1.1.182" evidence="1"/>
<dbReference type="EMBL" id="AE000516">
    <property type="protein sequence ID" value="AAK45289.1"/>
    <property type="molecule type" value="Genomic_DNA"/>
</dbReference>
<dbReference type="PIR" id="E70603">
    <property type="entry name" value="E70603"/>
</dbReference>
<dbReference type="RefSeq" id="WP_003405191.1">
    <property type="nucleotide sequence ID" value="NZ_KK341227.1"/>
</dbReference>
<dbReference type="SMR" id="P9WH06"/>
<dbReference type="GeneID" id="45424982"/>
<dbReference type="KEGG" id="mtc:MT1039"/>
<dbReference type="PATRIC" id="fig|83331.31.peg.1114"/>
<dbReference type="HOGENOM" id="CLU_041220_1_1_11"/>
<dbReference type="Proteomes" id="UP000001020">
    <property type="component" value="Chromosome"/>
</dbReference>
<dbReference type="GO" id="GO:0005829">
    <property type="term" value="C:cytosol"/>
    <property type="evidence" value="ECO:0007669"/>
    <property type="project" value="TreeGrafter"/>
</dbReference>
<dbReference type="GO" id="GO:0052908">
    <property type="term" value="F:16S rRNA (adenine(1518)-N(6)/adenine(1519)-N(6))-dimethyltransferase activity"/>
    <property type="evidence" value="ECO:0007669"/>
    <property type="project" value="UniProtKB-EC"/>
</dbReference>
<dbReference type="GO" id="GO:0003723">
    <property type="term" value="F:RNA binding"/>
    <property type="evidence" value="ECO:0007669"/>
    <property type="project" value="UniProtKB-KW"/>
</dbReference>
<dbReference type="CDD" id="cd02440">
    <property type="entry name" value="AdoMet_MTases"/>
    <property type="match status" value="1"/>
</dbReference>
<dbReference type="FunFam" id="1.10.8.100:FF:000003">
    <property type="entry name" value="Ribosomal RNA small subunit methyltransferase A"/>
    <property type="match status" value="1"/>
</dbReference>
<dbReference type="FunFam" id="3.40.50.150:FF:000023">
    <property type="entry name" value="Ribosomal RNA small subunit methyltransferase A"/>
    <property type="match status" value="1"/>
</dbReference>
<dbReference type="Gene3D" id="1.10.8.100">
    <property type="entry name" value="Ribosomal RNA adenine dimethylase-like, domain 2"/>
    <property type="match status" value="1"/>
</dbReference>
<dbReference type="Gene3D" id="3.40.50.150">
    <property type="entry name" value="Vaccinia Virus protein VP39"/>
    <property type="match status" value="1"/>
</dbReference>
<dbReference type="HAMAP" id="MF_00607">
    <property type="entry name" value="16SrRNA_methyltr_A"/>
    <property type="match status" value="1"/>
</dbReference>
<dbReference type="InterPro" id="IPR001737">
    <property type="entry name" value="KsgA/Erm"/>
</dbReference>
<dbReference type="InterPro" id="IPR023165">
    <property type="entry name" value="rRNA_Ade_diMease-like_C"/>
</dbReference>
<dbReference type="InterPro" id="IPR020596">
    <property type="entry name" value="rRNA_Ade_Mease_Trfase_CS"/>
</dbReference>
<dbReference type="InterPro" id="IPR020598">
    <property type="entry name" value="rRNA_Ade_methylase_Trfase_N"/>
</dbReference>
<dbReference type="InterPro" id="IPR011530">
    <property type="entry name" value="rRNA_adenine_dimethylase"/>
</dbReference>
<dbReference type="InterPro" id="IPR029063">
    <property type="entry name" value="SAM-dependent_MTases_sf"/>
</dbReference>
<dbReference type="NCBIfam" id="TIGR00755">
    <property type="entry name" value="ksgA"/>
    <property type="match status" value="1"/>
</dbReference>
<dbReference type="PANTHER" id="PTHR11727">
    <property type="entry name" value="DIMETHYLADENOSINE TRANSFERASE"/>
    <property type="match status" value="1"/>
</dbReference>
<dbReference type="PANTHER" id="PTHR11727:SF7">
    <property type="entry name" value="DIMETHYLADENOSINE TRANSFERASE-RELATED"/>
    <property type="match status" value="1"/>
</dbReference>
<dbReference type="Pfam" id="PF00398">
    <property type="entry name" value="RrnaAD"/>
    <property type="match status" value="1"/>
</dbReference>
<dbReference type="SMART" id="SM00650">
    <property type="entry name" value="rADc"/>
    <property type="match status" value="1"/>
</dbReference>
<dbReference type="SUPFAM" id="SSF53335">
    <property type="entry name" value="S-adenosyl-L-methionine-dependent methyltransferases"/>
    <property type="match status" value="1"/>
</dbReference>
<dbReference type="PROSITE" id="PS01131">
    <property type="entry name" value="RRNA_A_DIMETH"/>
    <property type="match status" value="1"/>
</dbReference>
<dbReference type="PROSITE" id="PS51689">
    <property type="entry name" value="SAM_RNA_A_N6_MT"/>
    <property type="match status" value="1"/>
</dbReference>
<keyword id="KW-0963">Cytoplasm</keyword>
<keyword id="KW-0489">Methyltransferase</keyword>
<keyword id="KW-1185">Reference proteome</keyword>
<keyword id="KW-0694">RNA-binding</keyword>
<keyword id="KW-0698">rRNA processing</keyword>
<keyword id="KW-0949">S-adenosyl-L-methionine</keyword>
<keyword id="KW-0808">Transferase</keyword>
<organism>
    <name type="scientific">Mycobacterium tuberculosis (strain CDC 1551 / Oshkosh)</name>
    <dbReference type="NCBI Taxonomy" id="83331"/>
    <lineage>
        <taxon>Bacteria</taxon>
        <taxon>Bacillati</taxon>
        <taxon>Actinomycetota</taxon>
        <taxon>Actinomycetes</taxon>
        <taxon>Mycobacteriales</taxon>
        <taxon>Mycobacteriaceae</taxon>
        <taxon>Mycobacterium</taxon>
        <taxon>Mycobacterium tuberculosis complex</taxon>
    </lineage>
</organism>
<protein>
    <recommendedName>
        <fullName evidence="1">Ribosomal RNA small subunit methyltransferase A</fullName>
        <ecNumber evidence="1">2.1.1.182</ecNumber>
    </recommendedName>
    <alternativeName>
        <fullName evidence="1">16S rRNA (adenine(1518)-N(6)/adenine(1519)-N(6))-dimethyltransferase</fullName>
    </alternativeName>
    <alternativeName>
        <fullName evidence="1">16S rRNA dimethyladenosine transferase</fullName>
    </alternativeName>
    <alternativeName>
        <fullName evidence="1">16S rRNA dimethylase</fullName>
    </alternativeName>
    <alternativeName>
        <fullName evidence="1">S-adenosylmethionine-6-N', N'-adenosyl(rRNA) dimethyltransferase</fullName>
    </alternativeName>
</protein>
<comment type="function">
    <text evidence="1">Specifically dimethylates two adjacent adenosines (A1518 and A1519) in the loop of a conserved hairpin near the 3'-end of 16S rRNA in the 30S particle. May play a critical role in biogenesis of 30S subunits.</text>
</comment>
<comment type="catalytic activity">
    <reaction evidence="1">
        <text>adenosine(1518)/adenosine(1519) in 16S rRNA + 4 S-adenosyl-L-methionine = N(6)-dimethyladenosine(1518)/N(6)-dimethyladenosine(1519) in 16S rRNA + 4 S-adenosyl-L-homocysteine + 4 H(+)</text>
        <dbReference type="Rhea" id="RHEA:19609"/>
        <dbReference type="Rhea" id="RHEA-COMP:10232"/>
        <dbReference type="Rhea" id="RHEA-COMP:10233"/>
        <dbReference type="ChEBI" id="CHEBI:15378"/>
        <dbReference type="ChEBI" id="CHEBI:57856"/>
        <dbReference type="ChEBI" id="CHEBI:59789"/>
        <dbReference type="ChEBI" id="CHEBI:74411"/>
        <dbReference type="ChEBI" id="CHEBI:74493"/>
        <dbReference type="EC" id="2.1.1.182"/>
    </reaction>
</comment>
<comment type="subcellular location">
    <subcellularLocation>
        <location evidence="1">Cytoplasm</location>
    </subcellularLocation>
</comment>
<comment type="similarity">
    <text evidence="1">Belongs to the class I-like SAM-binding methyltransferase superfamily. rRNA adenine N(6)-methyltransferase family. RsmA subfamily.</text>
</comment>